<gene>
    <name type="primary">Fam162a</name>
    <name type="synonym">E2ig5</name>
</gene>
<proteinExistence type="evidence at protein level"/>
<evidence type="ECO:0000250" key="1">
    <source>
        <dbReference type="UniProtKB" id="Q96A26"/>
    </source>
</evidence>
<evidence type="ECO:0000255" key="2"/>
<evidence type="ECO:0000269" key="3">
    <source>
    </source>
</evidence>
<evidence type="ECO:0000269" key="4">
    <source>
    </source>
</evidence>
<evidence type="ECO:0000305" key="5"/>
<accession>Q9D6U8</accession>
<keyword id="KW-0053">Apoptosis</keyword>
<keyword id="KW-0472">Membrane</keyword>
<keyword id="KW-0496">Mitochondrion</keyword>
<keyword id="KW-1185">Reference proteome</keyword>
<keyword id="KW-0812">Transmembrane</keyword>
<keyword id="KW-1133">Transmembrane helix</keyword>
<protein>
    <recommendedName>
        <fullName>Protein FAM162A</fullName>
    </recommendedName>
    <alternativeName>
        <fullName>E2-induced gene 5 protein homolog</fullName>
    </alternativeName>
    <alternativeName>
        <fullName>Growth and transformation-dependent protein</fullName>
        <shortName>HGTD-P</shortName>
    </alternativeName>
</protein>
<sequence length="155" mass="17725">MWSLGGLRLAAGHCLRLYERNASSSLRFTRNTDLKRINGFCTKPQESPKTPTQSYRHGVPLHKPTDFEKKILLWSGRFKKEEEIPETISFEMLDAAKNKLRVKVSYLMIALTVAGCIYMVIEGKKAAKRHESLTSLNLERKARLREEAAMKAKTD</sequence>
<dbReference type="EMBL" id="AK009946">
    <property type="protein sequence ID" value="BAB26601.1"/>
    <property type="molecule type" value="mRNA"/>
</dbReference>
<dbReference type="EMBL" id="BC010826">
    <property type="protein sequence ID" value="AAH10826.1"/>
    <property type="molecule type" value="mRNA"/>
</dbReference>
<dbReference type="CCDS" id="CCDS28146.1"/>
<dbReference type="RefSeq" id="NP_081618.1">
    <property type="nucleotide sequence ID" value="NM_027342.2"/>
</dbReference>
<dbReference type="SMR" id="Q9D6U8"/>
<dbReference type="BioGRID" id="213907">
    <property type="interactions" value="7"/>
</dbReference>
<dbReference type="FunCoup" id="Q9D6U8">
    <property type="interactions" value="2350"/>
</dbReference>
<dbReference type="IntAct" id="Q9D6U8">
    <property type="interactions" value="1"/>
</dbReference>
<dbReference type="STRING" id="10090.ENSMUSP00000004057"/>
<dbReference type="GlyGen" id="Q9D6U8">
    <property type="glycosylation" value="1 site, 1 O-linked glycan (1 site)"/>
</dbReference>
<dbReference type="iPTMnet" id="Q9D6U8"/>
<dbReference type="PhosphoSitePlus" id="Q9D6U8"/>
<dbReference type="SwissPalm" id="Q9D6U8"/>
<dbReference type="jPOST" id="Q9D6U8"/>
<dbReference type="PaxDb" id="10090-ENSMUSP00000004057"/>
<dbReference type="PeptideAtlas" id="Q9D6U8"/>
<dbReference type="ProteomicsDB" id="271523"/>
<dbReference type="Pumba" id="Q9D6U8"/>
<dbReference type="Antibodypedia" id="32893">
    <property type="antibodies" value="75 antibodies from 19 providers"/>
</dbReference>
<dbReference type="DNASU" id="70186"/>
<dbReference type="Ensembl" id="ENSMUST00000004057.9">
    <property type="protein sequence ID" value="ENSMUSP00000004057.8"/>
    <property type="gene ID" value="ENSMUSG00000003955.9"/>
</dbReference>
<dbReference type="GeneID" id="70186"/>
<dbReference type="KEGG" id="mmu:70186"/>
<dbReference type="UCSC" id="uc007zcd.1">
    <property type="organism name" value="mouse"/>
</dbReference>
<dbReference type="AGR" id="MGI:1917436"/>
<dbReference type="CTD" id="26355"/>
<dbReference type="MGI" id="MGI:1917436">
    <property type="gene designation" value="Fam162a"/>
</dbReference>
<dbReference type="VEuPathDB" id="HostDB:ENSMUSG00000003955"/>
<dbReference type="eggNOG" id="ENOG502S1PN">
    <property type="taxonomic scope" value="Eukaryota"/>
</dbReference>
<dbReference type="GeneTree" id="ENSGT00640000091497"/>
<dbReference type="HOGENOM" id="CLU_122911_0_0_1"/>
<dbReference type="InParanoid" id="Q9D6U8"/>
<dbReference type="OMA" id="VKVAYFA"/>
<dbReference type="OrthoDB" id="8193498at2759"/>
<dbReference type="PhylomeDB" id="Q9D6U8"/>
<dbReference type="TreeFam" id="TF323771"/>
<dbReference type="BioGRID-ORCS" id="70186">
    <property type="hits" value="3 hits in 76 CRISPR screens"/>
</dbReference>
<dbReference type="ChiTaRS" id="Fam162a">
    <property type="organism name" value="mouse"/>
</dbReference>
<dbReference type="PRO" id="PR:Q9D6U8"/>
<dbReference type="Proteomes" id="UP000000589">
    <property type="component" value="Chromosome 16"/>
</dbReference>
<dbReference type="RNAct" id="Q9D6U8">
    <property type="molecule type" value="protein"/>
</dbReference>
<dbReference type="Bgee" id="ENSMUSG00000003955">
    <property type="expression patterns" value="Expressed in mammary bud and 266 other cell types or tissues"/>
</dbReference>
<dbReference type="ExpressionAtlas" id="Q9D6U8">
    <property type="expression patterns" value="baseline and differential"/>
</dbReference>
<dbReference type="GO" id="GO:0005829">
    <property type="term" value="C:cytosol"/>
    <property type="evidence" value="ECO:0007669"/>
    <property type="project" value="Ensembl"/>
</dbReference>
<dbReference type="GO" id="GO:0031966">
    <property type="term" value="C:mitochondrial membrane"/>
    <property type="evidence" value="ECO:0007669"/>
    <property type="project" value="UniProtKB-SubCell"/>
</dbReference>
<dbReference type="GO" id="GO:0005739">
    <property type="term" value="C:mitochondrion"/>
    <property type="evidence" value="ECO:0007005"/>
    <property type="project" value="MGI"/>
</dbReference>
<dbReference type="GO" id="GO:0071456">
    <property type="term" value="P:cellular response to hypoxia"/>
    <property type="evidence" value="ECO:0000314"/>
    <property type="project" value="UniProtKB"/>
</dbReference>
<dbReference type="GO" id="GO:0051402">
    <property type="term" value="P:neuron apoptotic process"/>
    <property type="evidence" value="ECO:0000314"/>
    <property type="project" value="UniProtKB"/>
</dbReference>
<dbReference type="GO" id="GO:0043065">
    <property type="term" value="P:positive regulation of apoptotic process"/>
    <property type="evidence" value="ECO:0000314"/>
    <property type="project" value="UniProtKB"/>
</dbReference>
<dbReference type="GO" id="GO:0090200">
    <property type="term" value="P:positive regulation of release of cytochrome c from mitochondria"/>
    <property type="evidence" value="ECO:0000314"/>
    <property type="project" value="UniProtKB"/>
</dbReference>
<dbReference type="InterPro" id="IPR009432">
    <property type="entry name" value="DUF1075"/>
</dbReference>
<dbReference type="PANTHER" id="PTHR13674">
    <property type="entry name" value="GROWTH AND TRANSFORMATION-DEPENDENT PROTEIN"/>
    <property type="match status" value="1"/>
</dbReference>
<dbReference type="PANTHER" id="PTHR13674:SF2">
    <property type="entry name" value="PROTEIN FAM162A"/>
    <property type="match status" value="1"/>
</dbReference>
<dbReference type="Pfam" id="PF06388">
    <property type="entry name" value="DUF1075"/>
    <property type="match status" value="1"/>
</dbReference>
<name>F162A_MOUSE</name>
<reference key="1">
    <citation type="journal article" date="2005" name="Science">
        <title>The transcriptional landscape of the mammalian genome.</title>
        <authorList>
            <person name="Carninci P."/>
            <person name="Kasukawa T."/>
            <person name="Katayama S."/>
            <person name="Gough J."/>
            <person name="Frith M.C."/>
            <person name="Maeda N."/>
            <person name="Oyama R."/>
            <person name="Ravasi T."/>
            <person name="Lenhard B."/>
            <person name="Wells C."/>
            <person name="Kodzius R."/>
            <person name="Shimokawa K."/>
            <person name="Bajic V.B."/>
            <person name="Brenner S.E."/>
            <person name="Batalov S."/>
            <person name="Forrest A.R."/>
            <person name="Zavolan M."/>
            <person name="Davis M.J."/>
            <person name="Wilming L.G."/>
            <person name="Aidinis V."/>
            <person name="Allen J.E."/>
            <person name="Ambesi-Impiombato A."/>
            <person name="Apweiler R."/>
            <person name="Aturaliya R.N."/>
            <person name="Bailey T.L."/>
            <person name="Bansal M."/>
            <person name="Baxter L."/>
            <person name="Beisel K.W."/>
            <person name="Bersano T."/>
            <person name="Bono H."/>
            <person name="Chalk A.M."/>
            <person name="Chiu K.P."/>
            <person name="Choudhary V."/>
            <person name="Christoffels A."/>
            <person name="Clutterbuck D.R."/>
            <person name="Crowe M.L."/>
            <person name="Dalla E."/>
            <person name="Dalrymple B.P."/>
            <person name="de Bono B."/>
            <person name="Della Gatta G."/>
            <person name="di Bernardo D."/>
            <person name="Down T."/>
            <person name="Engstrom P."/>
            <person name="Fagiolini M."/>
            <person name="Faulkner G."/>
            <person name="Fletcher C.F."/>
            <person name="Fukushima T."/>
            <person name="Furuno M."/>
            <person name="Futaki S."/>
            <person name="Gariboldi M."/>
            <person name="Georgii-Hemming P."/>
            <person name="Gingeras T.R."/>
            <person name="Gojobori T."/>
            <person name="Green R.E."/>
            <person name="Gustincich S."/>
            <person name="Harbers M."/>
            <person name="Hayashi Y."/>
            <person name="Hensch T.K."/>
            <person name="Hirokawa N."/>
            <person name="Hill D."/>
            <person name="Huminiecki L."/>
            <person name="Iacono M."/>
            <person name="Ikeo K."/>
            <person name="Iwama A."/>
            <person name="Ishikawa T."/>
            <person name="Jakt M."/>
            <person name="Kanapin A."/>
            <person name="Katoh M."/>
            <person name="Kawasawa Y."/>
            <person name="Kelso J."/>
            <person name="Kitamura H."/>
            <person name="Kitano H."/>
            <person name="Kollias G."/>
            <person name="Krishnan S.P."/>
            <person name="Kruger A."/>
            <person name="Kummerfeld S.K."/>
            <person name="Kurochkin I.V."/>
            <person name="Lareau L.F."/>
            <person name="Lazarevic D."/>
            <person name="Lipovich L."/>
            <person name="Liu J."/>
            <person name="Liuni S."/>
            <person name="McWilliam S."/>
            <person name="Madan Babu M."/>
            <person name="Madera M."/>
            <person name="Marchionni L."/>
            <person name="Matsuda H."/>
            <person name="Matsuzawa S."/>
            <person name="Miki H."/>
            <person name="Mignone F."/>
            <person name="Miyake S."/>
            <person name="Morris K."/>
            <person name="Mottagui-Tabar S."/>
            <person name="Mulder N."/>
            <person name="Nakano N."/>
            <person name="Nakauchi H."/>
            <person name="Ng P."/>
            <person name="Nilsson R."/>
            <person name="Nishiguchi S."/>
            <person name="Nishikawa S."/>
            <person name="Nori F."/>
            <person name="Ohara O."/>
            <person name="Okazaki Y."/>
            <person name="Orlando V."/>
            <person name="Pang K.C."/>
            <person name="Pavan W.J."/>
            <person name="Pavesi G."/>
            <person name="Pesole G."/>
            <person name="Petrovsky N."/>
            <person name="Piazza S."/>
            <person name="Reed J."/>
            <person name="Reid J.F."/>
            <person name="Ring B.Z."/>
            <person name="Ringwald M."/>
            <person name="Rost B."/>
            <person name="Ruan Y."/>
            <person name="Salzberg S.L."/>
            <person name="Sandelin A."/>
            <person name="Schneider C."/>
            <person name="Schoenbach C."/>
            <person name="Sekiguchi K."/>
            <person name="Semple C.A."/>
            <person name="Seno S."/>
            <person name="Sessa L."/>
            <person name="Sheng Y."/>
            <person name="Shibata Y."/>
            <person name="Shimada H."/>
            <person name="Shimada K."/>
            <person name="Silva D."/>
            <person name="Sinclair B."/>
            <person name="Sperling S."/>
            <person name="Stupka E."/>
            <person name="Sugiura K."/>
            <person name="Sultana R."/>
            <person name="Takenaka Y."/>
            <person name="Taki K."/>
            <person name="Tammoja K."/>
            <person name="Tan S.L."/>
            <person name="Tang S."/>
            <person name="Taylor M.S."/>
            <person name="Tegner J."/>
            <person name="Teichmann S.A."/>
            <person name="Ueda H.R."/>
            <person name="van Nimwegen E."/>
            <person name="Verardo R."/>
            <person name="Wei C.L."/>
            <person name="Yagi K."/>
            <person name="Yamanishi H."/>
            <person name="Zabarovsky E."/>
            <person name="Zhu S."/>
            <person name="Zimmer A."/>
            <person name="Hide W."/>
            <person name="Bult C."/>
            <person name="Grimmond S.M."/>
            <person name="Teasdale R.D."/>
            <person name="Liu E.T."/>
            <person name="Brusic V."/>
            <person name="Quackenbush J."/>
            <person name="Wahlestedt C."/>
            <person name="Mattick J.S."/>
            <person name="Hume D.A."/>
            <person name="Kai C."/>
            <person name="Sasaki D."/>
            <person name="Tomaru Y."/>
            <person name="Fukuda S."/>
            <person name="Kanamori-Katayama M."/>
            <person name="Suzuki M."/>
            <person name="Aoki J."/>
            <person name="Arakawa T."/>
            <person name="Iida J."/>
            <person name="Imamura K."/>
            <person name="Itoh M."/>
            <person name="Kato T."/>
            <person name="Kawaji H."/>
            <person name="Kawagashira N."/>
            <person name="Kawashima T."/>
            <person name="Kojima M."/>
            <person name="Kondo S."/>
            <person name="Konno H."/>
            <person name="Nakano K."/>
            <person name="Ninomiya N."/>
            <person name="Nishio T."/>
            <person name="Okada M."/>
            <person name="Plessy C."/>
            <person name="Shibata K."/>
            <person name="Shiraki T."/>
            <person name="Suzuki S."/>
            <person name="Tagami M."/>
            <person name="Waki K."/>
            <person name="Watahiki A."/>
            <person name="Okamura-Oho Y."/>
            <person name="Suzuki H."/>
            <person name="Kawai J."/>
            <person name="Hayashizaki Y."/>
        </authorList>
    </citation>
    <scope>NUCLEOTIDE SEQUENCE [LARGE SCALE MRNA]</scope>
    <source>
        <strain>C57BL/6J</strain>
        <tissue>Tongue</tissue>
    </source>
</reference>
<reference key="2">
    <citation type="journal article" date="2004" name="Genome Res.">
        <title>The status, quality, and expansion of the NIH full-length cDNA project: the Mammalian Gene Collection (MGC).</title>
        <authorList>
            <consortium name="The MGC Project Team"/>
        </authorList>
    </citation>
    <scope>NUCLEOTIDE SEQUENCE [LARGE SCALE MRNA]</scope>
    <source>
        <strain>FVB/N</strain>
        <tissue>Colon</tissue>
    </source>
</reference>
<reference key="3">
    <citation type="journal article" date="2004" name="Mol. Cell. Biol.">
        <title>Identification of the hypoxia-inducible factor 1 alpha-responsive HGTD-P gene as a mediator in the mitochondrial apoptotic pathway.</title>
        <authorList>
            <person name="Lee M.J."/>
            <person name="Kim J.Y."/>
            <person name="Suk K."/>
            <person name="Park J.H."/>
        </authorList>
    </citation>
    <scope>FUNCTION</scope>
</reference>
<reference key="4">
    <citation type="journal article" date="2007" name="Neurosci. Lett.">
        <title>mHGTD-P mediates hypoxic neuronal cell death via the release of apoptosis-inducing factor.</title>
        <authorList>
            <person name="Cho Y.E."/>
            <person name="Ko J.H."/>
            <person name="Kim Y.J."/>
            <person name="Yim J.H."/>
            <person name="Kim S.M."/>
            <person name="Park J.H."/>
        </authorList>
    </citation>
    <scope>FUNCTION</scope>
    <scope>INDUCTION</scope>
</reference>
<reference key="5">
    <citation type="journal article" date="2010" name="Cell">
        <title>A tissue-specific atlas of mouse protein phosphorylation and expression.</title>
        <authorList>
            <person name="Huttlin E.L."/>
            <person name="Jedrychowski M.P."/>
            <person name="Elias J.E."/>
            <person name="Goswami T."/>
            <person name="Rad R."/>
            <person name="Beausoleil S.A."/>
            <person name="Villen J."/>
            <person name="Haas W."/>
            <person name="Sowa M.E."/>
            <person name="Gygi S.P."/>
        </authorList>
    </citation>
    <scope>IDENTIFICATION BY MASS SPECTROMETRY [LARGE SCALE ANALYSIS]</scope>
    <source>
        <tissue>Brain</tissue>
        <tissue>Brown adipose tissue</tissue>
        <tissue>Heart</tissue>
        <tissue>Kidney</tissue>
        <tissue>Liver</tissue>
        <tissue>Lung</tissue>
        <tissue>Pancreas</tissue>
        <tissue>Spleen</tissue>
        <tissue>Testis</tissue>
    </source>
</reference>
<organism>
    <name type="scientific">Mus musculus</name>
    <name type="common">Mouse</name>
    <dbReference type="NCBI Taxonomy" id="10090"/>
    <lineage>
        <taxon>Eukaryota</taxon>
        <taxon>Metazoa</taxon>
        <taxon>Chordata</taxon>
        <taxon>Craniata</taxon>
        <taxon>Vertebrata</taxon>
        <taxon>Euteleostomi</taxon>
        <taxon>Mammalia</taxon>
        <taxon>Eutheria</taxon>
        <taxon>Euarchontoglires</taxon>
        <taxon>Glires</taxon>
        <taxon>Rodentia</taxon>
        <taxon>Myomorpha</taxon>
        <taxon>Muroidea</taxon>
        <taxon>Muridae</taxon>
        <taxon>Murinae</taxon>
        <taxon>Mus</taxon>
        <taxon>Mus</taxon>
    </lineage>
</organism>
<feature type="chain" id="PRO_0000254636" description="Protein FAM162A">
    <location>
        <begin position="1"/>
        <end position="155"/>
    </location>
</feature>
<feature type="transmembrane region" description="Helical" evidence="2">
    <location>
        <begin position="104"/>
        <end position="121"/>
    </location>
</feature>
<feature type="region of interest" description="Required for proapoptotic activity" evidence="1">
    <location>
        <begin position="77"/>
        <end position="103"/>
    </location>
</feature>
<comment type="function">
    <text evidence="3 4">Proposed to be involved in regulation of apoptosis; the exact mechanism may differ between cell types/tissues (PubMed:15082785). May be involved in hypoxia-induced cell death of transformed cells implicating cytochrome C release and caspase activation (such as CASP9) and inducing mitochondrial permeability transition (PubMed:15082785). May be involved in hypoxia-induced cell death of neuronal cells probably by promoting release of AIFM1 from mitochondria to cytoplasm and its translocation to the nucleus; however, the involvement of caspases has been reported conflictingly (PubMed:17316997).</text>
</comment>
<comment type="subunit">
    <text evidence="1">Interacts with HSP90AB1; HSP90AB1 is essential for FAM162A mitochondrial localization and pro-apoptotic activity (By similarity). Interacts with VDAC2; the interaction is probably involved in inducing mitochondrial permeability transition (By similarity).</text>
</comment>
<comment type="subcellular location">
    <subcellularLocation>
        <location evidence="1">Mitochondrion membrane</location>
        <topology evidence="5">Single-pass membrane protein</topology>
    </subcellularLocation>
</comment>
<comment type="induction">
    <text evidence="4">Induced by hypoxia.</text>
</comment>
<comment type="similarity">
    <text evidence="5">Belongs to the UPF0389 family.</text>
</comment>